<evidence type="ECO:0000255" key="1">
    <source>
        <dbReference type="HAMAP-Rule" id="MF_01959"/>
    </source>
</evidence>
<evidence type="ECO:0000256" key="2">
    <source>
        <dbReference type="SAM" id="MobiDB-lite"/>
    </source>
</evidence>
<sequence length="173" mass="19094">MNPRRKSRFKLVIFVVLGIAIASGLMLYALRQNIDLFYTPSEVIQGKDNNPNQKPEVGQRIRVGGMVVEGTVVRDPKSLKVRFDLNDIGPAITVEYEGILPDLFREGQGIVAQGVLTQSAVLSATEVLAKHDENYVPPELGEKMQKVHKPMGIKAADLKGESARDRQEKEGAK</sequence>
<comment type="function">
    <text evidence="1">Heme chaperone required for the biogenesis of c-type cytochromes. Transiently binds heme delivered by CcmC and transfers the heme to apo-cytochromes in a process facilitated by CcmF and CcmH.</text>
</comment>
<comment type="subcellular location">
    <subcellularLocation>
        <location evidence="1">Cell inner membrane</location>
        <topology evidence="1">Single-pass type II membrane protein</topology>
        <orientation evidence="1">Periplasmic side</orientation>
    </subcellularLocation>
</comment>
<comment type="similarity">
    <text evidence="1">Belongs to the CcmE/CycJ family.</text>
</comment>
<feature type="chain" id="PRO_1000070815" description="Cytochrome c-type biogenesis protein CcmE">
    <location>
        <begin position="1"/>
        <end position="173"/>
    </location>
</feature>
<feature type="topological domain" description="Cytoplasmic" evidence="1">
    <location>
        <begin position="1"/>
        <end position="8"/>
    </location>
</feature>
<feature type="transmembrane region" description="Helical; Signal-anchor for type II membrane protein" evidence="1">
    <location>
        <begin position="9"/>
        <end position="29"/>
    </location>
</feature>
<feature type="topological domain" description="Periplasmic" evidence="1">
    <location>
        <begin position="30"/>
        <end position="173"/>
    </location>
</feature>
<feature type="region of interest" description="Disordered" evidence="2">
    <location>
        <begin position="152"/>
        <end position="173"/>
    </location>
</feature>
<feature type="compositionally biased region" description="Basic and acidic residues" evidence="2">
    <location>
        <begin position="156"/>
        <end position="173"/>
    </location>
</feature>
<feature type="binding site" description="covalent" evidence="1">
    <location>
        <position position="131"/>
    </location>
    <ligand>
        <name>heme</name>
        <dbReference type="ChEBI" id="CHEBI:30413"/>
    </ligand>
</feature>
<feature type="binding site" description="axial binding residue" evidence="1">
    <location>
        <position position="135"/>
    </location>
    <ligand>
        <name>heme</name>
        <dbReference type="ChEBI" id="CHEBI:30413"/>
    </ligand>
    <ligandPart>
        <name>Fe</name>
        <dbReference type="ChEBI" id="CHEBI:18248"/>
    </ligandPart>
</feature>
<accession>A5UD12</accession>
<reference key="1">
    <citation type="journal article" date="2007" name="Genome Biol.">
        <title>Characterization and modeling of the Haemophilus influenzae core and supragenomes based on the complete genomic sequences of Rd and 12 clinical nontypeable strains.</title>
        <authorList>
            <person name="Hogg J.S."/>
            <person name="Hu F.Z."/>
            <person name="Janto B."/>
            <person name="Boissy R."/>
            <person name="Hayes J."/>
            <person name="Keefe R."/>
            <person name="Post J.C."/>
            <person name="Ehrlich G.D."/>
        </authorList>
    </citation>
    <scope>NUCLEOTIDE SEQUENCE [LARGE SCALE GENOMIC DNA]</scope>
    <source>
        <strain>PittEE</strain>
    </source>
</reference>
<proteinExistence type="inferred from homology"/>
<gene>
    <name evidence="1" type="primary">ccmE</name>
    <name evidence="1" type="synonym">cycJ</name>
    <name type="ordered locus">CGSHiEE_06600</name>
</gene>
<dbReference type="EMBL" id="CP000671">
    <property type="protein sequence ID" value="ABQ98663.1"/>
    <property type="molecule type" value="Genomic_DNA"/>
</dbReference>
<dbReference type="SMR" id="A5UD12"/>
<dbReference type="KEGG" id="hip:CGSHiEE_06600"/>
<dbReference type="HOGENOM" id="CLU_079503_1_0_6"/>
<dbReference type="GO" id="GO:0005886">
    <property type="term" value="C:plasma membrane"/>
    <property type="evidence" value="ECO:0007669"/>
    <property type="project" value="UniProtKB-SubCell"/>
</dbReference>
<dbReference type="GO" id="GO:0020037">
    <property type="term" value="F:heme binding"/>
    <property type="evidence" value="ECO:0007669"/>
    <property type="project" value="InterPro"/>
</dbReference>
<dbReference type="GO" id="GO:0046872">
    <property type="term" value="F:metal ion binding"/>
    <property type="evidence" value="ECO:0007669"/>
    <property type="project" value="UniProtKB-KW"/>
</dbReference>
<dbReference type="GO" id="GO:0017004">
    <property type="term" value="P:cytochrome complex assembly"/>
    <property type="evidence" value="ECO:0007669"/>
    <property type="project" value="UniProtKB-KW"/>
</dbReference>
<dbReference type="FunFam" id="2.40.50.140:FF:000104">
    <property type="entry name" value="Cytochrome c-type biogenesis protein CcmE"/>
    <property type="match status" value="1"/>
</dbReference>
<dbReference type="Gene3D" id="2.40.50.140">
    <property type="entry name" value="Nucleic acid-binding proteins"/>
    <property type="match status" value="1"/>
</dbReference>
<dbReference type="HAMAP" id="MF_01959">
    <property type="entry name" value="CcmE"/>
    <property type="match status" value="1"/>
</dbReference>
<dbReference type="InterPro" id="IPR004329">
    <property type="entry name" value="CcmE"/>
</dbReference>
<dbReference type="InterPro" id="IPR036127">
    <property type="entry name" value="CcmE-like_sf"/>
</dbReference>
<dbReference type="InterPro" id="IPR012340">
    <property type="entry name" value="NA-bd_OB-fold"/>
</dbReference>
<dbReference type="NCBIfam" id="NF009638">
    <property type="entry name" value="PRK13165.1"/>
    <property type="match status" value="1"/>
</dbReference>
<dbReference type="NCBIfam" id="NF009727">
    <property type="entry name" value="PRK13254.1-1"/>
    <property type="match status" value="1"/>
</dbReference>
<dbReference type="NCBIfam" id="NF009729">
    <property type="entry name" value="PRK13254.1-3"/>
    <property type="match status" value="1"/>
</dbReference>
<dbReference type="PANTHER" id="PTHR34128">
    <property type="entry name" value="CYTOCHROME C-TYPE BIOGENESIS PROTEIN CCME HOMOLOG, MITOCHONDRIAL"/>
    <property type="match status" value="1"/>
</dbReference>
<dbReference type="PANTHER" id="PTHR34128:SF2">
    <property type="entry name" value="CYTOCHROME C-TYPE BIOGENESIS PROTEIN CCME HOMOLOG, MITOCHONDRIAL"/>
    <property type="match status" value="1"/>
</dbReference>
<dbReference type="Pfam" id="PF03100">
    <property type="entry name" value="CcmE"/>
    <property type="match status" value="1"/>
</dbReference>
<dbReference type="SUPFAM" id="SSF82093">
    <property type="entry name" value="Heme chaperone CcmE"/>
    <property type="match status" value="1"/>
</dbReference>
<name>CCME_HAEIE</name>
<organism>
    <name type="scientific">Haemophilus influenzae (strain PittEE)</name>
    <dbReference type="NCBI Taxonomy" id="374930"/>
    <lineage>
        <taxon>Bacteria</taxon>
        <taxon>Pseudomonadati</taxon>
        <taxon>Pseudomonadota</taxon>
        <taxon>Gammaproteobacteria</taxon>
        <taxon>Pasteurellales</taxon>
        <taxon>Pasteurellaceae</taxon>
        <taxon>Haemophilus</taxon>
    </lineage>
</organism>
<protein>
    <recommendedName>
        <fullName evidence="1">Cytochrome c-type biogenesis protein CcmE</fullName>
    </recommendedName>
    <alternativeName>
        <fullName evidence="1">Cytochrome c maturation protein E</fullName>
    </alternativeName>
    <alternativeName>
        <fullName evidence="1">Heme chaperone CcmE</fullName>
    </alternativeName>
</protein>
<keyword id="KW-0997">Cell inner membrane</keyword>
<keyword id="KW-1003">Cell membrane</keyword>
<keyword id="KW-0201">Cytochrome c-type biogenesis</keyword>
<keyword id="KW-0349">Heme</keyword>
<keyword id="KW-0408">Iron</keyword>
<keyword id="KW-0472">Membrane</keyword>
<keyword id="KW-0479">Metal-binding</keyword>
<keyword id="KW-0735">Signal-anchor</keyword>
<keyword id="KW-0812">Transmembrane</keyword>
<keyword id="KW-1133">Transmembrane helix</keyword>